<reference evidence="5" key="1">
    <citation type="journal article" date="2006" name="Biochem. J.">
        <title>A novel suite of cyclotides from Viola odorata: sequence variation and the implications for structure, function and stability.</title>
        <authorList>
            <person name="Ireland D.C."/>
            <person name="Colgrave M.L."/>
            <person name="Craik D.J."/>
        </authorList>
    </citation>
    <scope>PROTEIN SEQUENCE</scope>
    <scope>MASS SPECTROMETRY</scope>
</reference>
<reference key="2">
    <citation type="journal article" date="2017" name="J. Nat. Prod.">
        <title>Cyclotides from the Indian Medicinal Plant Viola odorata (Banafsha): Identification and Characterization.</title>
        <authorList>
            <person name="Narayani M."/>
            <person name="Chadha A."/>
            <person name="Srivastava S."/>
        </authorList>
    </citation>
    <scope>TISSUE SPECIFICITY</scope>
    <scope>IDENTIFICATION BY MASS SPECTROMETRY</scope>
</reference>
<organism>
    <name type="scientific">Viola odorata</name>
    <name type="common">Sweet violet</name>
    <dbReference type="NCBI Taxonomy" id="97441"/>
    <lineage>
        <taxon>Eukaryota</taxon>
        <taxon>Viridiplantae</taxon>
        <taxon>Streptophyta</taxon>
        <taxon>Embryophyta</taxon>
        <taxon>Tracheophyta</taxon>
        <taxon>Spermatophyta</taxon>
        <taxon>Magnoliopsida</taxon>
        <taxon>eudicotyledons</taxon>
        <taxon>Gunneridae</taxon>
        <taxon>Pentapetalae</taxon>
        <taxon>rosids</taxon>
        <taxon>fabids</taxon>
        <taxon>Malpighiales</taxon>
        <taxon>Violaceae</taxon>
        <taxon>Viola</taxon>
        <taxon>Viola subgen. Viola</taxon>
        <taxon>Viola sect. Viola</taxon>
        <taxon>Viola subsect. Viola</taxon>
    </lineage>
</organism>
<comment type="function">
    <text evidence="5">Probably participates in a plant defense mechanism.</text>
</comment>
<comment type="tissue specificity">
    <text evidence="4">Expressed in leaves but not in petals, petioles, roots and runners (at protein level).</text>
</comment>
<comment type="domain">
    <text evidence="1">The presence of a 'disulfide through disulfide knot' structurally defines this protein as a knottin.</text>
</comment>
<comment type="PTM">
    <text evidence="2 3">This is a cyclic peptide.</text>
</comment>
<comment type="mass spectrometry" mass="3137.2" method="MALDI" evidence="3"/>
<comment type="similarity">
    <text evidence="2">Belongs to the cyclotide family. Moebius subfamily.</text>
</comment>
<comment type="caution">
    <text evidence="3">This peptide is cyclic. The start position was chosen by similarity to OAK1 (kalata-B1) for which the DNA sequence is known.</text>
</comment>
<dbReference type="SMR" id="P85186"/>
<dbReference type="GO" id="GO:0006952">
    <property type="term" value="P:defense response"/>
    <property type="evidence" value="ECO:0007669"/>
    <property type="project" value="UniProtKB-KW"/>
</dbReference>
<dbReference type="InterPro" id="IPR005535">
    <property type="entry name" value="Cyclotide"/>
</dbReference>
<dbReference type="InterPro" id="IPR012324">
    <property type="entry name" value="Cyclotide_moebius_CS"/>
</dbReference>
<dbReference type="InterPro" id="IPR036146">
    <property type="entry name" value="Cyclotide_sf"/>
</dbReference>
<dbReference type="Pfam" id="PF03784">
    <property type="entry name" value="Cyclotide"/>
    <property type="match status" value="1"/>
</dbReference>
<dbReference type="SUPFAM" id="SSF57038">
    <property type="entry name" value="Cyclotides"/>
    <property type="match status" value="1"/>
</dbReference>
<dbReference type="PROSITE" id="PS51052">
    <property type="entry name" value="CYCLOTIDE"/>
    <property type="match status" value="1"/>
</dbReference>
<dbReference type="PROSITE" id="PS60009">
    <property type="entry name" value="CYCLOTIDE_MOEBIUS"/>
    <property type="match status" value="1"/>
</dbReference>
<feature type="peptide" id="PRO_0000294952" description="Cycloviolacin-O23" evidence="2 3">
    <location>
        <begin position="1"/>
        <end position="31"/>
    </location>
</feature>
<feature type="disulfide bond" evidence="1 2">
    <location>
        <begin position="5"/>
        <end position="19"/>
    </location>
</feature>
<feature type="disulfide bond" evidence="1 2">
    <location>
        <begin position="9"/>
        <end position="21"/>
    </location>
</feature>
<feature type="disulfide bond" evidence="1 2">
    <location>
        <begin position="14"/>
        <end position="28"/>
    </location>
</feature>
<feature type="cross-link" description="Cyclopeptide (Gly-Asn)" evidence="3">
    <location>
        <begin position="1"/>
        <end position="31"/>
    </location>
</feature>
<evidence type="ECO:0000250" key="1">
    <source>
        <dbReference type="UniProtKB" id="P58453"/>
    </source>
</evidence>
<evidence type="ECO:0000255" key="2">
    <source>
        <dbReference type="PROSITE-ProRule" id="PRU00395"/>
    </source>
</evidence>
<evidence type="ECO:0000269" key="3">
    <source>
    </source>
</evidence>
<evidence type="ECO:0000269" key="4">
    <source>
    </source>
</evidence>
<evidence type="ECO:0000305" key="5"/>
<proteinExistence type="evidence at protein level"/>
<protein>
    <recommendedName>
        <fullName>Cycloviolacin-O23</fullName>
    </recommendedName>
</protein>
<keyword id="KW-0903">Direct protein sequencing</keyword>
<keyword id="KW-1015">Disulfide bond</keyword>
<keyword id="KW-0960">Knottin</keyword>
<keyword id="KW-0611">Plant defense</keyword>
<sequence length="31" mass="3164">GLPTCGETCFGGTCNTPGCTCDSSWPICTHN</sequence>
<accession>P85186</accession>
<name>CYO23_VIOOD</name>